<geneLocation type="chloroplast"/>
<name>PSAJ_GUIAB</name>
<feature type="chain" id="PRO_0000354149" description="Photosystem I reaction center subunit IX">
    <location>
        <begin position="1"/>
        <end position="42"/>
    </location>
</feature>
<feature type="transmembrane region" description="Helical" evidence="1">
    <location>
        <begin position="7"/>
        <end position="27"/>
    </location>
</feature>
<keyword id="KW-0150">Chloroplast</keyword>
<keyword id="KW-0472">Membrane</keyword>
<keyword id="KW-0602">Photosynthesis</keyword>
<keyword id="KW-0603">Photosystem I</keyword>
<keyword id="KW-0934">Plastid</keyword>
<keyword id="KW-0793">Thylakoid</keyword>
<keyword id="KW-0812">Transmembrane</keyword>
<keyword id="KW-1133">Transmembrane helix</keyword>
<gene>
    <name evidence="1" type="primary">psaJ</name>
    <name type="ordered locus">GuabCp041</name>
</gene>
<reference key="1">
    <citation type="submission" date="2008-03" db="EMBL/GenBank/DDBJ databases">
        <title>Guizotia abyssinica chloroplast sequenced using Solexa.</title>
        <authorList>
            <person name="Kane N.C."/>
            <person name="Dempewolf H."/>
            <person name="Stewart M.L."/>
            <person name="Cronk Q."/>
            <person name="Rieseberrg L.H."/>
        </authorList>
    </citation>
    <scope>NUCLEOTIDE SEQUENCE [LARGE SCALE GENOMIC DNA]</scope>
    <source>
        <strain>cv. PI 508077</strain>
    </source>
</reference>
<protein>
    <recommendedName>
        <fullName evidence="1">Photosystem I reaction center subunit IX</fullName>
    </recommendedName>
    <alternativeName>
        <fullName evidence="1">PSI-J</fullName>
    </alternativeName>
</protein>
<comment type="function">
    <text evidence="1">May help in the organization of the PsaE and PsaF subunits.</text>
</comment>
<comment type="subcellular location">
    <subcellularLocation>
        <location evidence="1">Plastid</location>
        <location evidence="1">Chloroplast thylakoid membrane</location>
        <topology evidence="1">Single-pass membrane protein</topology>
    </subcellularLocation>
</comment>
<comment type="similarity">
    <text evidence="1">Belongs to the PsaJ family.</text>
</comment>
<proteinExistence type="inferred from homology"/>
<dbReference type="EMBL" id="EU549769">
    <property type="protein sequence ID" value="ACB86547.1"/>
    <property type="molecule type" value="Genomic_DNA"/>
</dbReference>
<dbReference type="RefSeq" id="YP_001837380.1">
    <property type="nucleotide sequence ID" value="NC_010601.1"/>
</dbReference>
<dbReference type="SMR" id="B2LML3"/>
<dbReference type="GeneID" id="6219127"/>
<dbReference type="GO" id="GO:0009535">
    <property type="term" value="C:chloroplast thylakoid membrane"/>
    <property type="evidence" value="ECO:0007669"/>
    <property type="project" value="UniProtKB-SubCell"/>
</dbReference>
<dbReference type="GO" id="GO:0009522">
    <property type="term" value="C:photosystem I"/>
    <property type="evidence" value="ECO:0007669"/>
    <property type="project" value="UniProtKB-KW"/>
</dbReference>
<dbReference type="GO" id="GO:0015979">
    <property type="term" value="P:photosynthesis"/>
    <property type="evidence" value="ECO:0007669"/>
    <property type="project" value="UniProtKB-UniRule"/>
</dbReference>
<dbReference type="FunFam" id="1.20.5.510:FF:000001">
    <property type="entry name" value="Photosystem I reaction center subunit IX"/>
    <property type="match status" value="1"/>
</dbReference>
<dbReference type="Gene3D" id="1.20.5.510">
    <property type="entry name" value="Single helix bin"/>
    <property type="match status" value="1"/>
</dbReference>
<dbReference type="HAMAP" id="MF_00522">
    <property type="entry name" value="PSI_PsaJ"/>
    <property type="match status" value="1"/>
</dbReference>
<dbReference type="InterPro" id="IPR002615">
    <property type="entry name" value="PSI_PsaJ"/>
</dbReference>
<dbReference type="InterPro" id="IPR036062">
    <property type="entry name" value="PSI_PsaJ_sf"/>
</dbReference>
<dbReference type="PANTHER" id="PTHR36082">
    <property type="match status" value="1"/>
</dbReference>
<dbReference type="PANTHER" id="PTHR36082:SF2">
    <property type="entry name" value="PHOTOSYSTEM I REACTION CENTER SUBUNIT IX"/>
    <property type="match status" value="1"/>
</dbReference>
<dbReference type="Pfam" id="PF01701">
    <property type="entry name" value="PSI_PsaJ"/>
    <property type="match status" value="1"/>
</dbReference>
<dbReference type="SUPFAM" id="SSF81544">
    <property type="entry name" value="Subunit IX of photosystem I reaction centre, PsaJ"/>
    <property type="match status" value="1"/>
</dbReference>
<organism>
    <name type="scientific">Guizotia abyssinica</name>
    <name type="common">Niger</name>
    <name type="synonym">Ramtilla</name>
    <dbReference type="NCBI Taxonomy" id="4230"/>
    <lineage>
        <taxon>Eukaryota</taxon>
        <taxon>Viridiplantae</taxon>
        <taxon>Streptophyta</taxon>
        <taxon>Embryophyta</taxon>
        <taxon>Tracheophyta</taxon>
        <taxon>Spermatophyta</taxon>
        <taxon>Magnoliopsida</taxon>
        <taxon>eudicotyledons</taxon>
        <taxon>Gunneridae</taxon>
        <taxon>Pentapetalae</taxon>
        <taxon>asterids</taxon>
        <taxon>campanulids</taxon>
        <taxon>Asterales</taxon>
        <taxon>Asteraceae</taxon>
        <taxon>Asteroideae</taxon>
        <taxon>Heliantheae alliance</taxon>
        <taxon>Millerieae</taxon>
        <taxon>Guizotia</taxon>
    </lineage>
</organism>
<evidence type="ECO:0000255" key="1">
    <source>
        <dbReference type="HAMAP-Rule" id="MF_00522"/>
    </source>
</evidence>
<sequence length="42" mass="4793">MRDLKTYLSVAPVLSTLWFGALAGLLIEINRFFPDALTFPFF</sequence>
<accession>B2LML3</accession>